<evidence type="ECO:0000255" key="1">
    <source>
        <dbReference type="HAMAP-Rule" id="MF_01445"/>
    </source>
</evidence>
<comment type="function">
    <text evidence="1">Required for the formation of a threonylcarbamoyl group on adenosine at position 37 (t(6)A37) in tRNAs that read codons beginning with adenine. Is involved in the transfer of the threonylcarbamoyl moiety of threonylcarbamoyl-AMP (TC-AMP) to the N6 group of A37, together with TsaE and TsaB. TsaD likely plays a direct catalytic role in this reaction.</text>
</comment>
<comment type="catalytic activity">
    <reaction evidence="1">
        <text>L-threonylcarbamoyladenylate + adenosine(37) in tRNA = N(6)-L-threonylcarbamoyladenosine(37) in tRNA + AMP + H(+)</text>
        <dbReference type="Rhea" id="RHEA:37059"/>
        <dbReference type="Rhea" id="RHEA-COMP:10162"/>
        <dbReference type="Rhea" id="RHEA-COMP:10163"/>
        <dbReference type="ChEBI" id="CHEBI:15378"/>
        <dbReference type="ChEBI" id="CHEBI:73682"/>
        <dbReference type="ChEBI" id="CHEBI:74411"/>
        <dbReference type="ChEBI" id="CHEBI:74418"/>
        <dbReference type="ChEBI" id="CHEBI:456215"/>
        <dbReference type="EC" id="2.3.1.234"/>
    </reaction>
</comment>
<comment type="cofactor">
    <cofactor evidence="1">
        <name>Fe(2+)</name>
        <dbReference type="ChEBI" id="CHEBI:29033"/>
    </cofactor>
    <text evidence="1">Binds 1 Fe(2+) ion per subunit.</text>
</comment>
<comment type="subcellular location">
    <subcellularLocation>
        <location evidence="1">Cytoplasm</location>
    </subcellularLocation>
</comment>
<comment type="similarity">
    <text evidence="1">Belongs to the KAE1 / TsaD family.</text>
</comment>
<proteinExistence type="inferred from homology"/>
<reference key="1">
    <citation type="journal article" date="2004" name="J. Bacteriol.">
        <title>The genome sequence of Mycoplasma hyopneumoniae strain 232, the agent of swine mycoplasmosis.</title>
        <authorList>
            <person name="Minion F.C."/>
            <person name="Lefkowitz E.J."/>
            <person name="Madsen M.L."/>
            <person name="Cleary B.J."/>
            <person name="Swartzell S.M."/>
            <person name="Mahairas G.G."/>
        </authorList>
    </citation>
    <scope>NUCLEOTIDE SEQUENCE [LARGE SCALE GENOMIC DNA]</scope>
    <source>
        <strain>232</strain>
    </source>
</reference>
<name>TSAD_MESH2</name>
<gene>
    <name evidence="1" type="primary">tsaD</name>
    <name type="synonym">gcp</name>
    <name type="ordered locus">mhp656</name>
</gene>
<protein>
    <recommendedName>
        <fullName evidence="1">tRNA N6-adenosine threonylcarbamoyltransferase</fullName>
        <ecNumber evidence="1">2.3.1.234</ecNumber>
    </recommendedName>
    <alternativeName>
        <fullName evidence="1">N6-L-threonylcarbamoyladenine synthase</fullName>
        <shortName evidence="1">t(6)A synthase</shortName>
    </alternativeName>
    <alternativeName>
        <fullName evidence="1">t(6)A37 threonylcarbamoyladenosine biosynthesis protein TsaD</fullName>
    </alternativeName>
    <alternativeName>
        <fullName evidence="1">tRNA threonylcarbamoyladenosine biosynthesis protein TsaD</fullName>
    </alternativeName>
</protein>
<accession>Q5ZZQ1</accession>
<organism>
    <name type="scientific">Mesomycoplasma hyopneumoniae (strain 232)</name>
    <name type="common">Mycoplasma hyopneumoniae</name>
    <dbReference type="NCBI Taxonomy" id="295358"/>
    <lineage>
        <taxon>Bacteria</taxon>
        <taxon>Bacillati</taxon>
        <taxon>Mycoplasmatota</taxon>
        <taxon>Mycoplasmoidales</taxon>
        <taxon>Metamycoplasmataceae</taxon>
        <taxon>Mesomycoplasma</taxon>
    </lineage>
</organism>
<sequence>MKILGIETSHDDASVALFSENKVEILLTISQFELHEQFGGTVPELASREHSRNLAIILEKLLGKNIDFSTIDAIAYTKNPGLIGPLKIGFLFASALSLFFNKPLIPIDHLLGHFWSAAIENDLEFPVLSLLISGGHTQLIFAENKNNLEIIGSTVDDALGEIYDKIGRSLGCGYPGGPKIDLIWQQNNVRNMELIDFSLPKVLENPLDFSFSGLKTQVINYTNNLKENYLFSQKKVVEIAVSFQKTVIKYLKRQLDLALKTKKNVKTITLVGGVAANSEIRKLIKTYENKYKVVIPKKEFCTDNGAMIAKAAQIFLKFNEEK</sequence>
<feature type="chain" id="PRO_0000303440" description="tRNA N6-adenosine threonylcarbamoyltransferase">
    <location>
        <begin position="1"/>
        <end position="322"/>
    </location>
</feature>
<feature type="binding site" evidence="1">
    <location>
        <position position="109"/>
    </location>
    <ligand>
        <name>Fe cation</name>
        <dbReference type="ChEBI" id="CHEBI:24875"/>
    </ligand>
</feature>
<feature type="binding site" evidence="1">
    <location>
        <position position="113"/>
    </location>
    <ligand>
        <name>Fe cation</name>
        <dbReference type="ChEBI" id="CHEBI:24875"/>
    </ligand>
</feature>
<feature type="binding site" evidence="1">
    <location>
        <begin position="131"/>
        <end position="135"/>
    </location>
    <ligand>
        <name>substrate</name>
    </ligand>
</feature>
<feature type="binding site" evidence="1">
    <location>
        <position position="164"/>
    </location>
    <ligand>
        <name>substrate</name>
    </ligand>
</feature>
<feature type="binding site" evidence="1">
    <location>
        <position position="177"/>
    </location>
    <ligand>
        <name>substrate</name>
    </ligand>
</feature>
<feature type="binding site" evidence="1">
    <location>
        <position position="181"/>
    </location>
    <ligand>
        <name>substrate</name>
    </ligand>
</feature>
<feature type="binding site" evidence="1">
    <location>
        <position position="277"/>
    </location>
    <ligand>
        <name>substrate</name>
    </ligand>
</feature>
<feature type="binding site" evidence="1">
    <location>
        <position position="303"/>
    </location>
    <ligand>
        <name>Fe cation</name>
        <dbReference type="ChEBI" id="CHEBI:24875"/>
    </ligand>
</feature>
<keyword id="KW-0012">Acyltransferase</keyword>
<keyword id="KW-0963">Cytoplasm</keyword>
<keyword id="KW-0408">Iron</keyword>
<keyword id="KW-0479">Metal-binding</keyword>
<keyword id="KW-0808">Transferase</keyword>
<keyword id="KW-0819">tRNA processing</keyword>
<dbReference type="EC" id="2.3.1.234" evidence="1"/>
<dbReference type="EMBL" id="AE017332">
    <property type="protein sequence ID" value="AAV28011.1"/>
    <property type="molecule type" value="Genomic_DNA"/>
</dbReference>
<dbReference type="RefSeq" id="WP_011206487.1">
    <property type="nucleotide sequence ID" value="NC_006360.1"/>
</dbReference>
<dbReference type="SMR" id="Q5ZZQ1"/>
<dbReference type="GeneID" id="41334937"/>
<dbReference type="KEGG" id="mhy:mhp656"/>
<dbReference type="eggNOG" id="COG0533">
    <property type="taxonomic scope" value="Bacteria"/>
</dbReference>
<dbReference type="HOGENOM" id="CLU_023208_0_1_14"/>
<dbReference type="PhylomeDB" id="Q5ZZQ1"/>
<dbReference type="Proteomes" id="UP000006822">
    <property type="component" value="Chromosome"/>
</dbReference>
<dbReference type="GO" id="GO:0005737">
    <property type="term" value="C:cytoplasm"/>
    <property type="evidence" value="ECO:0007669"/>
    <property type="project" value="UniProtKB-SubCell"/>
</dbReference>
<dbReference type="GO" id="GO:0005506">
    <property type="term" value="F:iron ion binding"/>
    <property type="evidence" value="ECO:0007669"/>
    <property type="project" value="UniProtKB-UniRule"/>
</dbReference>
<dbReference type="GO" id="GO:0061711">
    <property type="term" value="F:N(6)-L-threonylcarbamoyladenine synthase activity"/>
    <property type="evidence" value="ECO:0007669"/>
    <property type="project" value="UniProtKB-EC"/>
</dbReference>
<dbReference type="GO" id="GO:0002949">
    <property type="term" value="P:tRNA threonylcarbamoyladenosine modification"/>
    <property type="evidence" value="ECO:0007669"/>
    <property type="project" value="UniProtKB-UniRule"/>
</dbReference>
<dbReference type="Gene3D" id="3.30.420.40">
    <property type="match status" value="2"/>
</dbReference>
<dbReference type="HAMAP" id="MF_01445">
    <property type="entry name" value="TsaD"/>
    <property type="match status" value="1"/>
</dbReference>
<dbReference type="InterPro" id="IPR043129">
    <property type="entry name" value="ATPase_NBD"/>
</dbReference>
<dbReference type="InterPro" id="IPR000905">
    <property type="entry name" value="Gcp-like_dom"/>
</dbReference>
<dbReference type="InterPro" id="IPR017861">
    <property type="entry name" value="KAE1/TsaD"/>
</dbReference>
<dbReference type="InterPro" id="IPR022450">
    <property type="entry name" value="TsaD"/>
</dbReference>
<dbReference type="NCBIfam" id="TIGR00329">
    <property type="entry name" value="gcp_kae1"/>
    <property type="match status" value="1"/>
</dbReference>
<dbReference type="NCBIfam" id="TIGR03723">
    <property type="entry name" value="T6A_TsaD_YgjD"/>
    <property type="match status" value="1"/>
</dbReference>
<dbReference type="PANTHER" id="PTHR11735">
    <property type="entry name" value="TRNA N6-ADENOSINE THREONYLCARBAMOYLTRANSFERASE"/>
    <property type="match status" value="1"/>
</dbReference>
<dbReference type="PANTHER" id="PTHR11735:SF6">
    <property type="entry name" value="TRNA N6-ADENOSINE THREONYLCARBAMOYLTRANSFERASE, MITOCHONDRIAL"/>
    <property type="match status" value="1"/>
</dbReference>
<dbReference type="Pfam" id="PF00814">
    <property type="entry name" value="TsaD"/>
    <property type="match status" value="1"/>
</dbReference>
<dbReference type="PRINTS" id="PR00789">
    <property type="entry name" value="OSIALOPTASE"/>
</dbReference>
<dbReference type="SUPFAM" id="SSF53067">
    <property type="entry name" value="Actin-like ATPase domain"/>
    <property type="match status" value="1"/>
</dbReference>